<accession>A1VEA8</accession>
<organism>
    <name type="scientific">Nitratidesulfovibrio vulgaris (strain DP4)</name>
    <name type="common">Desulfovibrio vulgaris</name>
    <dbReference type="NCBI Taxonomy" id="391774"/>
    <lineage>
        <taxon>Bacteria</taxon>
        <taxon>Pseudomonadati</taxon>
        <taxon>Thermodesulfobacteriota</taxon>
        <taxon>Desulfovibrionia</taxon>
        <taxon>Desulfovibrionales</taxon>
        <taxon>Desulfovibrionaceae</taxon>
        <taxon>Nitratidesulfovibrio</taxon>
    </lineage>
</organism>
<gene>
    <name evidence="1" type="primary">rpmC</name>
    <name type="ordered locus">Dvul_1757</name>
</gene>
<sequence length="61" mass="7114">MKAAELRKLTAEELKTKLVEQQQELFNLRFRHATAQLENTSSMGDARRTIARIQTILKEKE</sequence>
<name>RL29_NITV4</name>
<keyword id="KW-0687">Ribonucleoprotein</keyword>
<keyword id="KW-0689">Ribosomal protein</keyword>
<dbReference type="EMBL" id="CP000527">
    <property type="protein sequence ID" value="ABM28774.1"/>
    <property type="molecule type" value="Genomic_DNA"/>
</dbReference>
<dbReference type="RefSeq" id="WP_010938606.1">
    <property type="nucleotide sequence ID" value="NC_008751.1"/>
</dbReference>
<dbReference type="SMR" id="A1VEA8"/>
<dbReference type="KEGG" id="dvl:Dvul_1757"/>
<dbReference type="HOGENOM" id="CLU_158491_5_2_7"/>
<dbReference type="Proteomes" id="UP000009173">
    <property type="component" value="Chromosome"/>
</dbReference>
<dbReference type="GO" id="GO:0022625">
    <property type="term" value="C:cytosolic large ribosomal subunit"/>
    <property type="evidence" value="ECO:0007669"/>
    <property type="project" value="TreeGrafter"/>
</dbReference>
<dbReference type="GO" id="GO:0003735">
    <property type="term" value="F:structural constituent of ribosome"/>
    <property type="evidence" value="ECO:0007669"/>
    <property type="project" value="InterPro"/>
</dbReference>
<dbReference type="GO" id="GO:0006412">
    <property type="term" value="P:translation"/>
    <property type="evidence" value="ECO:0007669"/>
    <property type="project" value="UniProtKB-UniRule"/>
</dbReference>
<dbReference type="CDD" id="cd00427">
    <property type="entry name" value="Ribosomal_L29_HIP"/>
    <property type="match status" value="1"/>
</dbReference>
<dbReference type="FunFam" id="1.10.287.310:FF:000001">
    <property type="entry name" value="50S ribosomal protein L29"/>
    <property type="match status" value="1"/>
</dbReference>
<dbReference type="Gene3D" id="1.10.287.310">
    <property type="match status" value="1"/>
</dbReference>
<dbReference type="HAMAP" id="MF_00374">
    <property type="entry name" value="Ribosomal_uL29"/>
    <property type="match status" value="1"/>
</dbReference>
<dbReference type="InterPro" id="IPR050063">
    <property type="entry name" value="Ribosomal_protein_uL29"/>
</dbReference>
<dbReference type="InterPro" id="IPR001854">
    <property type="entry name" value="Ribosomal_uL29"/>
</dbReference>
<dbReference type="InterPro" id="IPR018254">
    <property type="entry name" value="Ribosomal_uL29_CS"/>
</dbReference>
<dbReference type="InterPro" id="IPR036049">
    <property type="entry name" value="Ribosomal_uL29_sf"/>
</dbReference>
<dbReference type="NCBIfam" id="TIGR00012">
    <property type="entry name" value="L29"/>
    <property type="match status" value="1"/>
</dbReference>
<dbReference type="PANTHER" id="PTHR10916">
    <property type="entry name" value="60S RIBOSOMAL PROTEIN L35/50S RIBOSOMAL PROTEIN L29"/>
    <property type="match status" value="1"/>
</dbReference>
<dbReference type="PANTHER" id="PTHR10916:SF0">
    <property type="entry name" value="LARGE RIBOSOMAL SUBUNIT PROTEIN UL29C"/>
    <property type="match status" value="1"/>
</dbReference>
<dbReference type="Pfam" id="PF00831">
    <property type="entry name" value="Ribosomal_L29"/>
    <property type="match status" value="1"/>
</dbReference>
<dbReference type="SUPFAM" id="SSF46561">
    <property type="entry name" value="Ribosomal protein L29 (L29p)"/>
    <property type="match status" value="1"/>
</dbReference>
<dbReference type="PROSITE" id="PS00579">
    <property type="entry name" value="RIBOSOMAL_L29"/>
    <property type="match status" value="1"/>
</dbReference>
<reference key="1">
    <citation type="journal article" date="2009" name="Environ. Microbiol.">
        <title>Contribution of mobile genetic elements to Desulfovibrio vulgaris genome plasticity.</title>
        <authorList>
            <person name="Walker C.B."/>
            <person name="Stolyar S."/>
            <person name="Chivian D."/>
            <person name="Pinel N."/>
            <person name="Gabster J.A."/>
            <person name="Dehal P.S."/>
            <person name="He Z."/>
            <person name="Yang Z.K."/>
            <person name="Yen H.C."/>
            <person name="Zhou J."/>
            <person name="Wall J.D."/>
            <person name="Hazen T.C."/>
            <person name="Arkin A.P."/>
            <person name="Stahl D.A."/>
        </authorList>
    </citation>
    <scope>NUCLEOTIDE SEQUENCE [LARGE SCALE GENOMIC DNA]</scope>
    <source>
        <strain>DP4</strain>
    </source>
</reference>
<protein>
    <recommendedName>
        <fullName evidence="1">Large ribosomal subunit protein uL29</fullName>
    </recommendedName>
    <alternativeName>
        <fullName evidence="2">50S ribosomal protein L29</fullName>
    </alternativeName>
</protein>
<feature type="chain" id="PRO_1000007474" description="Large ribosomal subunit protein uL29">
    <location>
        <begin position="1"/>
        <end position="61"/>
    </location>
</feature>
<comment type="similarity">
    <text evidence="1">Belongs to the universal ribosomal protein uL29 family.</text>
</comment>
<evidence type="ECO:0000255" key="1">
    <source>
        <dbReference type="HAMAP-Rule" id="MF_00374"/>
    </source>
</evidence>
<evidence type="ECO:0000305" key="2"/>
<proteinExistence type="inferred from homology"/>